<proteinExistence type="inferred from homology"/>
<organism>
    <name type="scientific">Anaeromyxobacter dehalogenans (strain 2CP-C)</name>
    <dbReference type="NCBI Taxonomy" id="290397"/>
    <lineage>
        <taxon>Bacteria</taxon>
        <taxon>Pseudomonadati</taxon>
        <taxon>Myxococcota</taxon>
        <taxon>Myxococcia</taxon>
        <taxon>Myxococcales</taxon>
        <taxon>Cystobacterineae</taxon>
        <taxon>Anaeromyxobacteraceae</taxon>
        <taxon>Anaeromyxobacter</taxon>
    </lineage>
</organism>
<sequence length="308" mass="32667">MASWNQRTVAKRVSCTGVGLHSGRPATLTLAPAPADAGITFVRMDLGVEIPARNEHVVDTMLSTSLGRGGARVATVEHVMAALHGMGIDACRVEVDGPEIPILDGSAAPFTCLVQEAGVKVLPAGKRYLVVDQPVEIRDGDKLARLEPADGFSVSFTADFGHPLITDQSFQVKLGERAFEREVARARTFCFRRDIEKMQAMGLAKGGSLENAIVVDEFSILNPEGLRFPDEFARHKVLDAIGDLALFGMPVVGALVAVKSGHAMNQALVKKVLADPAAHRVVRVTGEADAPALRAKVPALAIHEGSAA</sequence>
<dbReference type="EC" id="3.5.1.108" evidence="1"/>
<dbReference type="EMBL" id="CP000251">
    <property type="protein sequence ID" value="ABC80730.1"/>
    <property type="molecule type" value="Genomic_DNA"/>
</dbReference>
<dbReference type="RefSeq" id="WP_011420013.1">
    <property type="nucleotide sequence ID" value="NC_007760.1"/>
</dbReference>
<dbReference type="SMR" id="Q2IPK1"/>
<dbReference type="STRING" id="290397.Adeh_0955"/>
<dbReference type="KEGG" id="ade:Adeh_0955"/>
<dbReference type="eggNOG" id="COG0774">
    <property type="taxonomic scope" value="Bacteria"/>
</dbReference>
<dbReference type="HOGENOM" id="CLU_046528_1_0_7"/>
<dbReference type="UniPathway" id="UPA00359">
    <property type="reaction ID" value="UER00478"/>
</dbReference>
<dbReference type="Proteomes" id="UP000001935">
    <property type="component" value="Chromosome"/>
</dbReference>
<dbReference type="GO" id="GO:0016020">
    <property type="term" value="C:membrane"/>
    <property type="evidence" value="ECO:0007669"/>
    <property type="project" value="GOC"/>
</dbReference>
<dbReference type="GO" id="GO:0046872">
    <property type="term" value="F:metal ion binding"/>
    <property type="evidence" value="ECO:0007669"/>
    <property type="project" value="UniProtKB-KW"/>
</dbReference>
<dbReference type="GO" id="GO:0103117">
    <property type="term" value="F:UDP-3-O-acyl-N-acetylglucosamine deacetylase activity"/>
    <property type="evidence" value="ECO:0007669"/>
    <property type="project" value="UniProtKB-UniRule"/>
</dbReference>
<dbReference type="GO" id="GO:0009245">
    <property type="term" value="P:lipid A biosynthetic process"/>
    <property type="evidence" value="ECO:0007669"/>
    <property type="project" value="UniProtKB-UniRule"/>
</dbReference>
<dbReference type="Gene3D" id="3.30.230.20">
    <property type="entry name" value="lpxc deacetylase, domain 1"/>
    <property type="match status" value="1"/>
</dbReference>
<dbReference type="Gene3D" id="3.30.1700.10">
    <property type="entry name" value="lpxc deacetylase, domain 2"/>
    <property type="match status" value="1"/>
</dbReference>
<dbReference type="HAMAP" id="MF_00388">
    <property type="entry name" value="LpxC"/>
    <property type="match status" value="1"/>
</dbReference>
<dbReference type="InterPro" id="IPR020568">
    <property type="entry name" value="Ribosomal_Su5_D2-typ_SF"/>
</dbReference>
<dbReference type="InterPro" id="IPR004463">
    <property type="entry name" value="UDP-acyl_GlcNac_deAcase"/>
</dbReference>
<dbReference type="InterPro" id="IPR011334">
    <property type="entry name" value="UDP-acyl_GlcNac_deAcase_C"/>
</dbReference>
<dbReference type="InterPro" id="IPR015870">
    <property type="entry name" value="UDP-acyl_N-AcGlcN_deAcase_N"/>
</dbReference>
<dbReference type="NCBIfam" id="TIGR00325">
    <property type="entry name" value="lpxC"/>
    <property type="match status" value="1"/>
</dbReference>
<dbReference type="PANTHER" id="PTHR33694">
    <property type="entry name" value="UDP-3-O-ACYL-N-ACETYLGLUCOSAMINE DEACETYLASE 1, MITOCHONDRIAL-RELATED"/>
    <property type="match status" value="1"/>
</dbReference>
<dbReference type="PANTHER" id="PTHR33694:SF1">
    <property type="entry name" value="UDP-3-O-ACYL-N-ACETYLGLUCOSAMINE DEACETYLASE 1, MITOCHONDRIAL-RELATED"/>
    <property type="match status" value="1"/>
</dbReference>
<dbReference type="Pfam" id="PF03331">
    <property type="entry name" value="LpxC"/>
    <property type="match status" value="1"/>
</dbReference>
<dbReference type="SUPFAM" id="SSF54211">
    <property type="entry name" value="Ribosomal protein S5 domain 2-like"/>
    <property type="match status" value="2"/>
</dbReference>
<comment type="function">
    <text evidence="1">Catalyzes the hydrolysis of UDP-3-O-myristoyl-N-acetylglucosamine to form UDP-3-O-myristoylglucosamine and acetate, the committed step in lipid A biosynthesis.</text>
</comment>
<comment type="catalytic activity">
    <reaction evidence="1">
        <text>a UDP-3-O-[(3R)-3-hydroxyacyl]-N-acetyl-alpha-D-glucosamine + H2O = a UDP-3-O-[(3R)-3-hydroxyacyl]-alpha-D-glucosamine + acetate</text>
        <dbReference type="Rhea" id="RHEA:67816"/>
        <dbReference type="ChEBI" id="CHEBI:15377"/>
        <dbReference type="ChEBI" id="CHEBI:30089"/>
        <dbReference type="ChEBI" id="CHEBI:137740"/>
        <dbReference type="ChEBI" id="CHEBI:173225"/>
        <dbReference type="EC" id="3.5.1.108"/>
    </reaction>
</comment>
<comment type="cofactor">
    <cofactor evidence="1">
        <name>Zn(2+)</name>
        <dbReference type="ChEBI" id="CHEBI:29105"/>
    </cofactor>
</comment>
<comment type="pathway">
    <text evidence="1">Glycolipid biosynthesis; lipid IV(A) biosynthesis; lipid IV(A) from (3R)-3-hydroxytetradecanoyl-[acyl-carrier-protein] and UDP-N-acetyl-alpha-D-glucosamine: step 2/6.</text>
</comment>
<comment type="similarity">
    <text evidence="1">Belongs to the LpxC family.</text>
</comment>
<gene>
    <name evidence="1" type="primary">lpxC</name>
    <name type="ordered locus">Adeh_0955</name>
</gene>
<accession>Q2IPK1</accession>
<protein>
    <recommendedName>
        <fullName evidence="1">UDP-3-O-acyl-N-acetylglucosamine deacetylase</fullName>
        <shortName evidence="1">UDP-3-O-acyl-GlcNAc deacetylase</shortName>
        <ecNumber evidence="1">3.5.1.108</ecNumber>
    </recommendedName>
    <alternativeName>
        <fullName evidence="1">UDP-3-O-[R-3-hydroxymyristoyl]-N-acetylglucosamine deacetylase</fullName>
    </alternativeName>
</protein>
<evidence type="ECO:0000255" key="1">
    <source>
        <dbReference type="HAMAP-Rule" id="MF_00388"/>
    </source>
</evidence>
<reference key="1">
    <citation type="submission" date="2006-01" db="EMBL/GenBank/DDBJ databases">
        <title>Complete sequence of Anaeromyxobacter dehalogenans 2CP-C.</title>
        <authorList>
            <person name="Copeland A."/>
            <person name="Lucas S."/>
            <person name="Lapidus A."/>
            <person name="Barry K."/>
            <person name="Detter J.C."/>
            <person name="Glavina T."/>
            <person name="Hammon N."/>
            <person name="Israni S."/>
            <person name="Pitluck S."/>
            <person name="Brettin T."/>
            <person name="Bruce D."/>
            <person name="Han C."/>
            <person name="Tapia R."/>
            <person name="Gilna P."/>
            <person name="Kiss H."/>
            <person name="Schmutz J."/>
            <person name="Larimer F."/>
            <person name="Land M."/>
            <person name="Kyrpides N."/>
            <person name="Anderson I."/>
            <person name="Sanford R.A."/>
            <person name="Ritalahti K.M."/>
            <person name="Thomas H.S."/>
            <person name="Kirby J.R."/>
            <person name="Zhulin I.B."/>
            <person name="Loeffler F.E."/>
            <person name="Richardson P."/>
        </authorList>
    </citation>
    <scope>NUCLEOTIDE SEQUENCE [LARGE SCALE GENOMIC DNA]</scope>
    <source>
        <strain>2CP-C</strain>
    </source>
</reference>
<keyword id="KW-0378">Hydrolase</keyword>
<keyword id="KW-0441">Lipid A biosynthesis</keyword>
<keyword id="KW-0444">Lipid biosynthesis</keyword>
<keyword id="KW-0443">Lipid metabolism</keyword>
<keyword id="KW-0479">Metal-binding</keyword>
<keyword id="KW-1185">Reference proteome</keyword>
<keyword id="KW-0862">Zinc</keyword>
<feature type="chain" id="PRO_0000253642" description="UDP-3-O-acyl-N-acetylglucosamine deacetylase">
    <location>
        <begin position="1"/>
        <end position="308"/>
    </location>
</feature>
<feature type="active site" description="Proton donor" evidence="1">
    <location>
        <position position="262"/>
    </location>
</feature>
<feature type="binding site" evidence="1">
    <location>
        <position position="78"/>
    </location>
    <ligand>
        <name>Zn(2+)</name>
        <dbReference type="ChEBI" id="CHEBI:29105"/>
    </ligand>
</feature>
<feature type="binding site" evidence="1">
    <location>
        <position position="235"/>
    </location>
    <ligand>
        <name>Zn(2+)</name>
        <dbReference type="ChEBI" id="CHEBI:29105"/>
    </ligand>
</feature>
<feature type="binding site" evidence="1">
    <location>
        <position position="239"/>
    </location>
    <ligand>
        <name>Zn(2+)</name>
        <dbReference type="ChEBI" id="CHEBI:29105"/>
    </ligand>
</feature>
<name>LPXC_ANADE</name>